<sequence>MDARALWQRYQNWLYFHEGLGLYLDISRMRFDDAFVESLQPKFDKAFADMAELEKGAIANPDENRMVGHYWLRNPDLAPTPELTQEIVQTLEQIEAFAEKVQTGAIHPPRASRFTDIISIGIGGSALGPQFVAEALAPDFPPLKIHFIDNNDPAGIDRVLNHLRNSLASTLVLVISKSGGTPEPRNGMIEVKKAYAGHNLEFAQYAVAITSVDSNLDKLAKDEGWLARFPMYDWVGGRTSEMSAVGLVPAALQGIDVRAMLDGAKEMDDATRVPDVKNNPAALLALSWYFAGNGKGEKDMVVLPYKDSLFLFSRYLQQLVMESLGKEKDLDGNVVHQGIAVYGNKGSTDQHAYVQQLREGVANFFATFVEVLEDRQGPSTEIDPGVTSGDYLSGFLQGTRQALYENHRDSITVTIPQVNPRTVGALIALYERAVGLYASLVNVNAYHQPGVEAGKKAAASILDLQTRVVAVLQKEKTPISLDELAKKAGASDQIEAIYKILRHIHANQRGVVLQGDLHKPGSLTVSAS</sequence>
<keyword id="KW-0963">Cytoplasm</keyword>
<keyword id="KW-0312">Gluconeogenesis</keyword>
<keyword id="KW-0324">Glycolysis</keyword>
<keyword id="KW-0413">Isomerase</keyword>
<keyword id="KW-1185">Reference proteome</keyword>
<evidence type="ECO:0000255" key="1">
    <source>
        <dbReference type="HAMAP-Rule" id="MF_00473"/>
    </source>
</evidence>
<reference key="1">
    <citation type="journal article" date="2013" name="Plant Physiol.">
        <title>A Nostoc punctiforme Sugar Transporter Necessary to Establish a Cyanobacterium-Plant Symbiosis.</title>
        <authorList>
            <person name="Ekman M."/>
            <person name="Picossi S."/>
            <person name="Campbell E.L."/>
            <person name="Meeks J.C."/>
            <person name="Flores E."/>
        </authorList>
    </citation>
    <scope>NUCLEOTIDE SEQUENCE [LARGE SCALE GENOMIC DNA]</scope>
    <source>
        <strain>ATCC 29133 / PCC 73102</strain>
    </source>
</reference>
<organism>
    <name type="scientific">Nostoc punctiforme (strain ATCC 29133 / PCC 73102)</name>
    <dbReference type="NCBI Taxonomy" id="63737"/>
    <lineage>
        <taxon>Bacteria</taxon>
        <taxon>Bacillati</taxon>
        <taxon>Cyanobacteriota</taxon>
        <taxon>Cyanophyceae</taxon>
        <taxon>Nostocales</taxon>
        <taxon>Nostocaceae</taxon>
        <taxon>Nostoc</taxon>
    </lineage>
</organism>
<accession>B2J5F1</accession>
<gene>
    <name evidence="1" type="primary">pgi</name>
    <name type="ordered locus">Npun_F3925</name>
</gene>
<name>G6PI_NOSP7</name>
<proteinExistence type="inferred from homology"/>
<protein>
    <recommendedName>
        <fullName evidence="1">Glucose-6-phosphate isomerase</fullName>
        <shortName evidence="1">GPI</shortName>
        <ecNumber evidence="1">5.3.1.9</ecNumber>
    </recommendedName>
    <alternativeName>
        <fullName evidence="1">Phosphoglucose isomerase</fullName>
        <shortName evidence="1">PGI</shortName>
    </alternativeName>
    <alternativeName>
        <fullName evidence="1">Phosphohexose isomerase</fullName>
        <shortName evidence="1">PHI</shortName>
    </alternativeName>
</protein>
<feature type="chain" id="PRO_1000125742" description="Glucose-6-phosphate isomerase">
    <location>
        <begin position="1"/>
        <end position="528"/>
    </location>
</feature>
<feature type="active site" description="Proton donor" evidence="1">
    <location>
        <position position="322"/>
    </location>
</feature>
<feature type="active site" evidence="1">
    <location>
        <position position="351"/>
    </location>
</feature>
<feature type="active site" evidence="1">
    <location>
        <position position="455"/>
    </location>
</feature>
<comment type="function">
    <text evidence="1">Catalyzes the reversible isomerization of glucose-6-phosphate to fructose-6-phosphate.</text>
</comment>
<comment type="catalytic activity">
    <reaction evidence="1">
        <text>alpha-D-glucose 6-phosphate = beta-D-fructose 6-phosphate</text>
        <dbReference type="Rhea" id="RHEA:11816"/>
        <dbReference type="ChEBI" id="CHEBI:57634"/>
        <dbReference type="ChEBI" id="CHEBI:58225"/>
        <dbReference type="EC" id="5.3.1.9"/>
    </reaction>
</comment>
<comment type="pathway">
    <text evidence="1">Carbohydrate biosynthesis; gluconeogenesis.</text>
</comment>
<comment type="pathway">
    <text evidence="1">Carbohydrate degradation; glycolysis; D-glyceraldehyde 3-phosphate and glycerone phosphate from D-glucose: step 2/4.</text>
</comment>
<comment type="subcellular location">
    <subcellularLocation>
        <location evidence="1">Cytoplasm</location>
    </subcellularLocation>
</comment>
<comment type="similarity">
    <text evidence="1">Belongs to the GPI family.</text>
</comment>
<dbReference type="EC" id="5.3.1.9" evidence="1"/>
<dbReference type="EMBL" id="CP001037">
    <property type="protein sequence ID" value="ACC82308.1"/>
    <property type="molecule type" value="Genomic_DNA"/>
</dbReference>
<dbReference type="RefSeq" id="WP_012410277.1">
    <property type="nucleotide sequence ID" value="NC_010628.1"/>
</dbReference>
<dbReference type="SMR" id="B2J5F1"/>
<dbReference type="STRING" id="63737.Npun_F3925"/>
<dbReference type="EnsemblBacteria" id="ACC82308">
    <property type="protein sequence ID" value="ACC82308"/>
    <property type="gene ID" value="Npun_F3925"/>
</dbReference>
<dbReference type="KEGG" id="npu:Npun_F3925"/>
<dbReference type="eggNOG" id="COG0166">
    <property type="taxonomic scope" value="Bacteria"/>
</dbReference>
<dbReference type="HOGENOM" id="CLU_033288_0_0_3"/>
<dbReference type="OrthoDB" id="140919at2"/>
<dbReference type="PhylomeDB" id="B2J5F1"/>
<dbReference type="UniPathway" id="UPA00109">
    <property type="reaction ID" value="UER00181"/>
</dbReference>
<dbReference type="UniPathway" id="UPA00138"/>
<dbReference type="Proteomes" id="UP000001191">
    <property type="component" value="Chromosome"/>
</dbReference>
<dbReference type="GO" id="GO:0005829">
    <property type="term" value="C:cytosol"/>
    <property type="evidence" value="ECO:0007669"/>
    <property type="project" value="TreeGrafter"/>
</dbReference>
<dbReference type="GO" id="GO:0097367">
    <property type="term" value="F:carbohydrate derivative binding"/>
    <property type="evidence" value="ECO:0007669"/>
    <property type="project" value="InterPro"/>
</dbReference>
<dbReference type="GO" id="GO:0004347">
    <property type="term" value="F:glucose-6-phosphate isomerase activity"/>
    <property type="evidence" value="ECO:0007669"/>
    <property type="project" value="UniProtKB-UniRule"/>
</dbReference>
<dbReference type="GO" id="GO:0048029">
    <property type="term" value="F:monosaccharide binding"/>
    <property type="evidence" value="ECO:0007669"/>
    <property type="project" value="TreeGrafter"/>
</dbReference>
<dbReference type="GO" id="GO:0006094">
    <property type="term" value="P:gluconeogenesis"/>
    <property type="evidence" value="ECO:0007669"/>
    <property type="project" value="UniProtKB-UniRule"/>
</dbReference>
<dbReference type="GO" id="GO:0051156">
    <property type="term" value="P:glucose 6-phosphate metabolic process"/>
    <property type="evidence" value="ECO:0007669"/>
    <property type="project" value="TreeGrafter"/>
</dbReference>
<dbReference type="GO" id="GO:0006096">
    <property type="term" value="P:glycolytic process"/>
    <property type="evidence" value="ECO:0007669"/>
    <property type="project" value="UniProtKB-UniRule"/>
</dbReference>
<dbReference type="CDD" id="cd05015">
    <property type="entry name" value="SIS_PGI_1"/>
    <property type="match status" value="1"/>
</dbReference>
<dbReference type="CDD" id="cd05016">
    <property type="entry name" value="SIS_PGI_2"/>
    <property type="match status" value="1"/>
</dbReference>
<dbReference type="FunFam" id="3.40.50.10490:FF:000021">
    <property type="entry name" value="Glucose-6-phosphate isomerase"/>
    <property type="match status" value="1"/>
</dbReference>
<dbReference type="FunFam" id="3.40.50.10490:FF:000023">
    <property type="entry name" value="Glucose-6-phosphate isomerase"/>
    <property type="match status" value="1"/>
</dbReference>
<dbReference type="Gene3D" id="3.40.50.10490">
    <property type="entry name" value="Glucose-6-phosphate isomerase like protein, domain 1"/>
    <property type="match status" value="2"/>
</dbReference>
<dbReference type="HAMAP" id="MF_00473">
    <property type="entry name" value="G6P_isomerase"/>
    <property type="match status" value="1"/>
</dbReference>
<dbReference type="InterPro" id="IPR001672">
    <property type="entry name" value="G6P_Isomerase"/>
</dbReference>
<dbReference type="InterPro" id="IPR018189">
    <property type="entry name" value="Phosphoglucose_isomerase_CS"/>
</dbReference>
<dbReference type="InterPro" id="IPR046348">
    <property type="entry name" value="SIS_dom_sf"/>
</dbReference>
<dbReference type="InterPro" id="IPR035476">
    <property type="entry name" value="SIS_PGI_1"/>
</dbReference>
<dbReference type="InterPro" id="IPR035482">
    <property type="entry name" value="SIS_PGI_2"/>
</dbReference>
<dbReference type="NCBIfam" id="NF010696">
    <property type="entry name" value="PRK14096.1"/>
    <property type="match status" value="1"/>
</dbReference>
<dbReference type="PANTHER" id="PTHR11469">
    <property type="entry name" value="GLUCOSE-6-PHOSPHATE ISOMERASE"/>
    <property type="match status" value="1"/>
</dbReference>
<dbReference type="PANTHER" id="PTHR11469:SF1">
    <property type="entry name" value="GLUCOSE-6-PHOSPHATE ISOMERASE"/>
    <property type="match status" value="1"/>
</dbReference>
<dbReference type="Pfam" id="PF00342">
    <property type="entry name" value="PGI"/>
    <property type="match status" value="2"/>
</dbReference>
<dbReference type="PRINTS" id="PR00662">
    <property type="entry name" value="G6PISOMERASE"/>
</dbReference>
<dbReference type="SUPFAM" id="SSF53697">
    <property type="entry name" value="SIS domain"/>
    <property type="match status" value="1"/>
</dbReference>
<dbReference type="PROSITE" id="PS00174">
    <property type="entry name" value="P_GLUCOSE_ISOMERASE_2"/>
    <property type="match status" value="1"/>
</dbReference>
<dbReference type="PROSITE" id="PS51463">
    <property type="entry name" value="P_GLUCOSE_ISOMERASE_3"/>
    <property type="match status" value="1"/>
</dbReference>